<proteinExistence type="inferred from homology"/>
<gene>
    <name evidence="1" type="primary">aroB</name>
    <name type="ordered locus">Oant_0910</name>
</gene>
<dbReference type="EC" id="4.2.3.4" evidence="1"/>
<dbReference type="EMBL" id="CP000758">
    <property type="protein sequence ID" value="ABS13631.1"/>
    <property type="molecule type" value="Genomic_DNA"/>
</dbReference>
<dbReference type="RefSeq" id="WP_012091116.1">
    <property type="nucleotide sequence ID" value="NC_009667.1"/>
</dbReference>
<dbReference type="SMR" id="A6WXC7"/>
<dbReference type="STRING" id="439375.Oant_0910"/>
<dbReference type="KEGG" id="oan:Oant_0910"/>
<dbReference type="PATRIC" id="fig|439375.7.peg.952"/>
<dbReference type="eggNOG" id="COG0337">
    <property type="taxonomic scope" value="Bacteria"/>
</dbReference>
<dbReference type="HOGENOM" id="CLU_001201_0_2_5"/>
<dbReference type="PhylomeDB" id="A6WXC7"/>
<dbReference type="UniPathway" id="UPA00053">
    <property type="reaction ID" value="UER00085"/>
</dbReference>
<dbReference type="Proteomes" id="UP000002301">
    <property type="component" value="Chromosome 1"/>
</dbReference>
<dbReference type="GO" id="GO:0005737">
    <property type="term" value="C:cytoplasm"/>
    <property type="evidence" value="ECO:0007669"/>
    <property type="project" value="UniProtKB-SubCell"/>
</dbReference>
<dbReference type="GO" id="GO:0003856">
    <property type="term" value="F:3-dehydroquinate synthase activity"/>
    <property type="evidence" value="ECO:0007669"/>
    <property type="project" value="UniProtKB-UniRule"/>
</dbReference>
<dbReference type="GO" id="GO:0046872">
    <property type="term" value="F:metal ion binding"/>
    <property type="evidence" value="ECO:0007669"/>
    <property type="project" value="UniProtKB-KW"/>
</dbReference>
<dbReference type="GO" id="GO:0000166">
    <property type="term" value="F:nucleotide binding"/>
    <property type="evidence" value="ECO:0007669"/>
    <property type="project" value="UniProtKB-KW"/>
</dbReference>
<dbReference type="GO" id="GO:0008652">
    <property type="term" value="P:amino acid biosynthetic process"/>
    <property type="evidence" value="ECO:0007669"/>
    <property type="project" value="UniProtKB-KW"/>
</dbReference>
<dbReference type="GO" id="GO:0009073">
    <property type="term" value="P:aromatic amino acid family biosynthetic process"/>
    <property type="evidence" value="ECO:0007669"/>
    <property type="project" value="UniProtKB-KW"/>
</dbReference>
<dbReference type="GO" id="GO:0009423">
    <property type="term" value="P:chorismate biosynthetic process"/>
    <property type="evidence" value="ECO:0007669"/>
    <property type="project" value="UniProtKB-UniRule"/>
</dbReference>
<dbReference type="CDD" id="cd08195">
    <property type="entry name" value="DHQS"/>
    <property type="match status" value="1"/>
</dbReference>
<dbReference type="FunFam" id="3.40.50.1970:FF:000001">
    <property type="entry name" value="3-dehydroquinate synthase"/>
    <property type="match status" value="1"/>
</dbReference>
<dbReference type="Gene3D" id="3.40.50.1970">
    <property type="match status" value="1"/>
</dbReference>
<dbReference type="Gene3D" id="1.20.1090.10">
    <property type="entry name" value="Dehydroquinate synthase-like - alpha domain"/>
    <property type="match status" value="1"/>
</dbReference>
<dbReference type="HAMAP" id="MF_00110">
    <property type="entry name" value="DHQ_synthase"/>
    <property type="match status" value="1"/>
</dbReference>
<dbReference type="InterPro" id="IPR050071">
    <property type="entry name" value="Dehydroquinate_synthase"/>
</dbReference>
<dbReference type="InterPro" id="IPR016037">
    <property type="entry name" value="DHQ_synth_AroB"/>
</dbReference>
<dbReference type="InterPro" id="IPR030963">
    <property type="entry name" value="DHQ_synth_fam"/>
</dbReference>
<dbReference type="InterPro" id="IPR030960">
    <property type="entry name" value="DHQS/DOIS_N"/>
</dbReference>
<dbReference type="InterPro" id="IPR056179">
    <property type="entry name" value="DHQS_C"/>
</dbReference>
<dbReference type="NCBIfam" id="TIGR01357">
    <property type="entry name" value="aroB"/>
    <property type="match status" value="1"/>
</dbReference>
<dbReference type="PANTHER" id="PTHR43622">
    <property type="entry name" value="3-DEHYDROQUINATE SYNTHASE"/>
    <property type="match status" value="1"/>
</dbReference>
<dbReference type="PANTHER" id="PTHR43622:SF7">
    <property type="entry name" value="3-DEHYDROQUINATE SYNTHASE, CHLOROPLASTIC"/>
    <property type="match status" value="1"/>
</dbReference>
<dbReference type="Pfam" id="PF01761">
    <property type="entry name" value="DHQ_synthase"/>
    <property type="match status" value="1"/>
</dbReference>
<dbReference type="Pfam" id="PF24621">
    <property type="entry name" value="DHQS_C"/>
    <property type="match status" value="1"/>
</dbReference>
<dbReference type="PIRSF" id="PIRSF001455">
    <property type="entry name" value="DHQ_synth"/>
    <property type="match status" value="1"/>
</dbReference>
<dbReference type="SUPFAM" id="SSF56796">
    <property type="entry name" value="Dehydroquinate synthase-like"/>
    <property type="match status" value="1"/>
</dbReference>
<organism>
    <name type="scientific">Brucella anthropi (strain ATCC 49188 / DSM 6882 / CCUG 24695 / JCM 21032 / LMG 3331 / NBRC 15819 / NCTC 12168 / Alc 37)</name>
    <name type="common">Ochrobactrum anthropi</name>
    <dbReference type="NCBI Taxonomy" id="439375"/>
    <lineage>
        <taxon>Bacteria</taxon>
        <taxon>Pseudomonadati</taxon>
        <taxon>Pseudomonadota</taxon>
        <taxon>Alphaproteobacteria</taxon>
        <taxon>Hyphomicrobiales</taxon>
        <taxon>Brucellaceae</taxon>
        <taxon>Brucella/Ochrobactrum group</taxon>
        <taxon>Brucella</taxon>
    </lineage>
</organism>
<name>AROB_BRUA4</name>
<feature type="chain" id="PRO_1000094557" description="3-dehydroquinate synthase">
    <location>
        <begin position="1"/>
        <end position="378"/>
    </location>
</feature>
<feature type="binding site" evidence="1">
    <location>
        <begin position="115"/>
        <end position="119"/>
    </location>
    <ligand>
        <name>NAD(+)</name>
        <dbReference type="ChEBI" id="CHEBI:57540"/>
    </ligand>
</feature>
<feature type="binding site" evidence="1">
    <location>
        <begin position="139"/>
        <end position="140"/>
    </location>
    <ligand>
        <name>NAD(+)</name>
        <dbReference type="ChEBI" id="CHEBI:57540"/>
    </ligand>
</feature>
<feature type="binding site" evidence="1">
    <location>
        <position position="152"/>
    </location>
    <ligand>
        <name>NAD(+)</name>
        <dbReference type="ChEBI" id="CHEBI:57540"/>
    </ligand>
</feature>
<feature type="binding site" evidence="1">
    <location>
        <position position="161"/>
    </location>
    <ligand>
        <name>NAD(+)</name>
        <dbReference type="ChEBI" id="CHEBI:57540"/>
    </ligand>
</feature>
<feature type="binding site" evidence="1">
    <location>
        <position position="194"/>
    </location>
    <ligand>
        <name>Zn(2+)</name>
        <dbReference type="ChEBI" id="CHEBI:29105"/>
    </ligand>
</feature>
<feature type="binding site" evidence="1">
    <location>
        <position position="256"/>
    </location>
    <ligand>
        <name>Zn(2+)</name>
        <dbReference type="ChEBI" id="CHEBI:29105"/>
    </ligand>
</feature>
<feature type="binding site" evidence="1">
    <location>
        <position position="275"/>
    </location>
    <ligand>
        <name>Zn(2+)</name>
        <dbReference type="ChEBI" id="CHEBI:29105"/>
    </ligand>
</feature>
<sequence length="378" mass="40257">MNAPSIAQDVTTVPVSLGNRSYDILIGKGLVDRAGEELAKRLKGVRVAVVTDENVAKAHLERLTASFAKAGVDVTPVIVAPGEKSKSFGTLETVTNAVLAARLERGDAVVAFGGGVVGDLSGFVAGIVRRGMNFVQMPTSLLSQVDSSVGGKTGVNTAHGKNLVGVFYQPQLVLADTEVLDTLSPREFRAGYAEVAKYGLIDRPDFFEWLEQNWQEVFSGGAARTQAIAESCRCKAAVVARDERETGDRALLNLGHTFGHALETATGYDSTRLVHGEGVAIGMALAHRFSVKMNLCGIEDAERVEAHLKAVGLPYRLSDVPGGLPPAEKLMDYIAQDKKVARGALTFILTRGIGQSFIAKDVPPAAVLGFLKERLETK</sequence>
<reference key="1">
    <citation type="journal article" date="2011" name="J. Bacteriol.">
        <title>Genome of Ochrobactrum anthropi ATCC 49188 T, a versatile opportunistic pathogen and symbiont of several eukaryotic hosts.</title>
        <authorList>
            <person name="Chain P.S."/>
            <person name="Lang D.M."/>
            <person name="Comerci D.J."/>
            <person name="Malfatti S.A."/>
            <person name="Vergez L.M."/>
            <person name="Shin M."/>
            <person name="Ugalde R.A."/>
            <person name="Garcia E."/>
            <person name="Tolmasky M.E."/>
        </authorList>
    </citation>
    <scope>NUCLEOTIDE SEQUENCE [LARGE SCALE GENOMIC DNA]</scope>
    <source>
        <strain>ATCC 49188 / DSM 6882 / CCUG 24695 / JCM 21032 / LMG 3331 / NBRC 15819 / NCTC 12168 / Alc 37</strain>
    </source>
</reference>
<keyword id="KW-0028">Amino-acid biosynthesis</keyword>
<keyword id="KW-0057">Aromatic amino acid biosynthesis</keyword>
<keyword id="KW-0170">Cobalt</keyword>
<keyword id="KW-0963">Cytoplasm</keyword>
<keyword id="KW-0456">Lyase</keyword>
<keyword id="KW-0479">Metal-binding</keyword>
<keyword id="KW-0520">NAD</keyword>
<keyword id="KW-0547">Nucleotide-binding</keyword>
<keyword id="KW-1185">Reference proteome</keyword>
<keyword id="KW-0862">Zinc</keyword>
<protein>
    <recommendedName>
        <fullName evidence="1">3-dehydroquinate synthase</fullName>
        <shortName evidence="1">DHQS</shortName>
        <ecNumber evidence="1">4.2.3.4</ecNumber>
    </recommendedName>
</protein>
<evidence type="ECO:0000255" key="1">
    <source>
        <dbReference type="HAMAP-Rule" id="MF_00110"/>
    </source>
</evidence>
<comment type="function">
    <text evidence="1">Catalyzes the conversion of 3-deoxy-D-arabino-heptulosonate 7-phosphate (DAHP) to dehydroquinate (DHQ).</text>
</comment>
<comment type="catalytic activity">
    <reaction evidence="1">
        <text>7-phospho-2-dehydro-3-deoxy-D-arabino-heptonate = 3-dehydroquinate + phosphate</text>
        <dbReference type="Rhea" id="RHEA:21968"/>
        <dbReference type="ChEBI" id="CHEBI:32364"/>
        <dbReference type="ChEBI" id="CHEBI:43474"/>
        <dbReference type="ChEBI" id="CHEBI:58394"/>
        <dbReference type="EC" id="4.2.3.4"/>
    </reaction>
</comment>
<comment type="cofactor">
    <cofactor evidence="1">
        <name>Co(2+)</name>
        <dbReference type="ChEBI" id="CHEBI:48828"/>
    </cofactor>
    <cofactor evidence="1">
        <name>Zn(2+)</name>
        <dbReference type="ChEBI" id="CHEBI:29105"/>
    </cofactor>
    <text evidence="1">Binds 1 divalent metal cation per subunit. Can use either Co(2+) or Zn(2+).</text>
</comment>
<comment type="cofactor">
    <cofactor evidence="1">
        <name>NAD(+)</name>
        <dbReference type="ChEBI" id="CHEBI:57540"/>
    </cofactor>
</comment>
<comment type="pathway">
    <text evidence="1">Metabolic intermediate biosynthesis; chorismate biosynthesis; chorismate from D-erythrose 4-phosphate and phosphoenolpyruvate: step 2/7.</text>
</comment>
<comment type="subcellular location">
    <subcellularLocation>
        <location evidence="1">Cytoplasm</location>
    </subcellularLocation>
</comment>
<comment type="similarity">
    <text evidence="1">Belongs to the sugar phosphate cyclases superfamily. Dehydroquinate synthase family.</text>
</comment>
<accession>A6WXC7</accession>